<organism>
    <name type="scientific">Mesocricetus auratus</name>
    <name type="common">Golden hamster</name>
    <dbReference type="NCBI Taxonomy" id="10036"/>
    <lineage>
        <taxon>Eukaryota</taxon>
        <taxon>Metazoa</taxon>
        <taxon>Chordata</taxon>
        <taxon>Craniata</taxon>
        <taxon>Vertebrata</taxon>
        <taxon>Euteleostomi</taxon>
        <taxon>Mammalia</taxon>
        <taxon>Eutheria</taxon>
        <taxon>Euarchontoglires</taxon>
        <taxon>Glires</taxon>
        <taxon>Rodentia</taxon>
        <taxon>Myomorpha</taxon>
        <taxon>Muroidea</taxon>
        <taxon>Cricetidae</taxon>
        <taxon>Cricetinae</taxon>
        <taxon>Mesocricetus</taxon>
    </lineage>
</organism>
<accession>P17714</accession>
<sequence length="561" mass="64274">MCGIWALFGSDDCLSVQCLSAMKIAHRGPDAFRFENVNGYTNCCFGFHRLAVVDPLFGMQPIRVKKYPYLWLCYNGEIYNHKALQQRFEFEYQTNVDGEIILHLYDKGGIEQTICMLDGVFAFILLDTANKKVFLGRDTYGVRPLFKAMTEDGFLAVCSEAKGLVSLKHSTTPFLKVEPFLPGHYEVLDLKPNGKVASVEMVKYHHCRDEPLHALYDSVEKLFPGFELETVKSNLRILFDNAVRKRLMTDRRIVCLLSGGLDSSLVASSLLKQLKEAQVQYPLQTFAIGMEDSPDLLAARKVANYIGSEHHEVLFNSEEGIQALDEVIFSLETYDITTVRASVGMYLISKYIRKNTDSVVIFSGEGSDELTQGYIYFHKAPSPEKAEEESERLLKELYLFDVLRADRTTAAHGLELRVPFLDHRFSSYYLSLPPEMRVPKNGIEKHLLRETFEDSNLLPKEILWRPKEAFSDGITSVKNSWFKILQDYVEHQVDDAMMATAAQKFPFNTPKTKEGYFYRQIFEHHYPGRADWLTHYWMPKWINATDPSARTLTHYKSAAKA</sequence>
<evidence type="ECO:0000250" key="1"/>
<evidence type="ECO:0000250" key="2">
    <source>
        <dbReference type="UniProtKB" id="P08243"/>
    </source>
</evidence>
<evidence type="ECO:0000255" key="3">
    <source>
        <dbReference type="PROSITE-ProRule" id="PRU00609"/>
    </source>
</evidence>
<dbReference type="EC" id="6.3.5.4"/>
<dbReference type="EMBL" id="X52130">
    <property type="protein sequence ID" value="CAA36375.1"/>
    <property type="molecule type" value="mRNA"/>
</dbReference>
<dbReference type="PIR" id="S12740">
    <property type="entry name" value="AJHYNG"/>
</dbReference>
<dbReference type="RefSeq" id="NP_001268543.1">
    <property type="nucleotide sequence ID" value="NM_001281614.1"/>
</dbReference>
<dbReference type="SMR" id="P17714"/>
<dbReference type="STRING" id="10036.ENSMAUP00000003671"/>
<dbReference type="MEROPS" id="C44.974"/>
<dbReference type="GeneID" id="101836926"/>
<dbReference type="KEGG" id="maua:101836926"/>
<dbReference type="CTD" id="440"/>
<dbReference type="OrthoDB" id="409189at2759"/>
<dbReference type="UniPathway" id="UPA00134">
    <property type="reaction ID" value="UER00195"/>
</dbReference>
<dbReference type="Proteomes" id="UP000189706">
    <property type="component" value="Unplaced"/>
</dbReference>
<dbReference type="GO" id="GO:0005829">
    <property type="term" value="C:cytosol"/>
    <property type="evidence" value="ECO:0007669"/>
    <property type="project" value="TreeGrafter"/>
</dbReference>
<dbReference type="GO" id="GO:0004066">
    <property type="term" value="F:asparagine synthase (glutamine-hydrolyzing) activity"/>
    <property type="evidence" value="ECO:0007669"/>
    <property type="project" value="UniProtKB-EC"/>
</dbReference>
<dbReference type="GO" id="GO:0005524">
    <property type="term" value="F:ATP binding"/>
    <property type="evidence" value="ECO:0007669"/>
    <property type="project" value="UniProtKB-KW"/>
</dbReference>
<dbReference type="GO" id="GO:0070981">
    <property type="term" value="P:L-asparagine biosynthetic process"/>
    <property type="evidence" value="ECO:0007669"/>
    <property type="project" value="UniProtKB-UniPathway"/>
</dbReference>
<dbReference type="CDD" id="cd01991">
    <property type="entry name" value="Asn_synthase_B_C"/>
    <property type="match status" value="1"/>
</dbReference>
<dbReference type="CDD" id="cd00712">
    <property type="entry name" value="AsnB"/>
    <property type="match status" value="1"/>
</dbReference>
<dbReference type="FunFam" id="3.60.20.10:FF:000039">
    <property type="entry name" value="Asparagine synthetase [glutamine-hydrolyzing]"/>
    <property type="match status" value="1"/>
</dbReference>
<dbReference type="FunFam" id="3.40.50.620:FF:000090">
    <property type="entry name" value="asparagine synthetase [glutamine-hydrolyzing]"/>
    <property type="match status" value="1"/>
</dbReference>
<dbReference type="Gene3D" id="3.60.20.10">
    <property type="entry name" value="Glutamine Phosphoribosylpyrophosphate, subunit 1, domain 1"/>
    <property type="match status" value="1"/>
</dbReference>
<dbReference type="Gene3D" id="3.40.50.620">
    <property type="entry name" value="HUPs"/>
    <property type="match status" value="1"/>
</dbReference>
<dbReference type="InterPro" id="IPR006426">
    <property type="entry name" value="Asn_synth_AEB"/>
</dbReference>
<dbReference type="InterPro" id="IPR001962">
    <property type="entry name" value="Asn_synthase"/>
</dbReference>
<dbReference type="InterPro" id="IPR050795">
    <property type="entry name" value="Asn_Synthetase"/>
</dbReference>
<dbReference type="InterPro" id="IPR033738">
    <property type="entry name" value="AsnB_N"/>
</dbReference>
<dbReference type="InterPro" id="IPR017932">
    <property type="entry name" value="GATase_2_dom"/>
</dbReference>
<dbReference type="InterPro" id="IPR029055">
    <property type="entry name" value="Ntn_hydrolases_N"/>
</dbReference>
<dbReference type="InterPro" id="IPR014729">
    <property type="entry name" value="Rossmann-like_a/b/a_fold"/>
</dbReference>
<dbReference type="NCBIfam" id="TIGR01536">
    <property type="entry name" value="asn_synth_AEB"/>
    <property type="match status" value="1"/>
</dbReference>
<dbReference type="PANTHER" id="PTHR11772">
    <property type="entry name" value="ASPARAGINE SYNTHETASE"/>
    <property type="match status" value="1"/>
</dbReference>
<dbReference type="PANTHER" id="PTHR11772:SF23">
    <property type="entry name" value="ASPARAGINE SYNTHETASE [GLUTAMINE-HYDROLYZING]"/>
    <property type="match status" value="1"/>
</dbReference>
<dbReference type="Pfam" id="PF00733">
    <property type="entry name" value="Asn_synthase"/>
    <property type="match status" value="2"/>
</dbReference>
<dbReference type="Pfam" id="PF13537">
    <property type="entry name" value="GATase_7"/>
    <property type="match status" value="1"/>
</dbReference>
<dbReference type="PIRSF" id="PIRSF001589">
    <property type="entry name" value="Asn_synthetase_glu-h"/>
    <property type="match status" value="1"/>
</dbReference>
<dbReference type="SUPFAM" id="SSF52402">
    <property type="entry name" value="Adenine nucleotide alpha hydrolases-like"/>
    <property type="match status" value="1"/>
</dbReference>
<dbReference type="SUPFAM" id="SSF56235">
    <property type="entry name" value="N-terminal nucleophile aminohydrolases (Ntn hydrolases)"/>
    <property type="match status" value="1"/>
</dbReference>
<dbReference type="PROSITE" id="PS51278">
    <property type="entry name" value="GATASE_TYPE_2"/>
    <property type="match status" value="1"/>
</dbReference>
<comment type="catalytic activity">
    <reaction>
        <text>L-aspartate + L-glutamine + ATP + H2O = L-asparagine + L-glutamate + AMP + diphosphate + H(+)</text>
        <dbReference type="Rhea" id="RHEA:12228"/>
        <dbReference type="ChEBI" id="CHEBI:15377"/>
        <dbReference type="ChEBI" id="CHEBI:15378"/>
        <dbReference type="ChEBI" id="CHEBI:29985"/>
        <dbReference type="ChEBI" id="CHEBI:29991"/>
        <dbReference type="ChEBI" id="CHEBI:30616"/>
        <dbReference type="ChEBI" id="CHEBI:33019"/>
        <dbReference type="ChEBI" id="CHEBI:58048"/>
        <dbReference type="ChEBI" id="CHEBI:58359"/>
        <dbReference type="ChEBI" id="CHEBI:456215"/>
        <dbReference type="EC" id="6.3.5.4"/>
    </reaction>
</comment>
<comment type="pathway">
    <text>Amino-acid biosynthesis; L-asparagine biosynthesis; L-asparagine from L-aspartate (L-Gln route): step 1/1.</text>
</comment>
<comment type="miscellaneous">
    <text>The temperature-sensitive mutation affecting G1 progression results from a single amino acid substitution.</text>
</comment>
<feature type="initiator methionine" description="Removed" evidence="1">
    <location>
        <position position="1"/>
    </location>
</feature>
<feature type="chain" id="PRO_0000056911" description="Asparagine synthetase [glutamine-hydrolyzing]">
    <location>
        <begin position="2"/>
        <end position="561"/>
    </location>
</feature>
<feature type="domain" description="Glutamine amidotransferase type-2" evidence="3">
    <location>
        <begin position="2"/>
        <end position="191"/>
    </location>
</feature>
<feature type="domain" description="Asparagine synthetase">
    <location>
        <begin position="213"/>
        <end position="536"/>
    </location>
</feature>
<feature type="active site" description="For GATase activity" evidence="1">
    <location>
        <position position="2"/>
    </location>
</feature>
<feature type="binding site" evidence="1">
    <location>
        <begin position="49"/>
        <end position="53"/>
    </location>
    <ligand>
        <name>L-glutamine</name>
        <dbReference type="ChEBI" id="CHEBI:58359"/>
    </ligand>
</feature>
<feature type="binding site" evidence="1">
    <location>
        <begin position="75"/>
        <end position="77"/>
    </location>
    <ligand>
        <name>L-glutamine</name>
        <dbReference type="ChEBI" id="CHEBI:58359"/>
    </ligand>
</feature>
<feature type="binding site" evidence="1">
    <location>
        <position position="97"/>
    </location>
    <ligand>
        <name>L-glutamine</name>
        <dbReference type="ChEBI" id="CHEBI:58359"/>
    </ligand>
</feature>
<feature type="binding site" evidence="1">
    <location>
        <position position="256"/>
    </location>
    <ligand>
        <name>ATP</name>
        <dbReference type="ChEBI" id="CHEBI:30616"/>
    </ligand>
</feature>
<feature type="binding site" evidence="1">
    <location>
        <position position="288"/>
    </location>
    <ligand>
        <name>ATP</name>
        <dbReference type="ChEBI" id="CHEBI:30616"/>
    </ligand>
</feature>
<feature type="binding site" evidence="1">
    <location>
        <begin position="363"/>
        <end position="364"/>
    </location>
    <ligand>
        <name>ATP</name>
        <dbReference type="ChEBI" id="CHEBI:30616"/>
    </ligand>
</feature>
<feature type="site" description="Important for beta-aspartyl-AMP intermediate formation" evidence="1">
    <location>
        <position position="365"/>
    </location>
</feature>
<feature type="modified residue" description="N6-acetyllysine" evidence="2">
    <location>
        <position position="385"/>
    </location>
</feature>
<feature type="modified residue" description="Phosphothreonine" evidence="2">
    <location>
        <position position="545"/>
    </location>
</feature>
<feature type="modified residue" description="Phosphoserine" evidence="2">
    <location>
        <position position="557"/>
    </location>
</feature>
<feature type="mutagenesis site" description="In ts11; temperature-sensitive. Blocked in the G1 phase of the cell cycle at the non-permissive temperature (39.5 degrees Celsius). Heat labile.">
    <original>L</original>
    <variation>F</variation>
    <location>
        <position position="414"/>
    </location>
</feature>
<name>ASNS_MESAU</name>
<gene>
    <name type="primary">ASNS</name>
</gene>
<protein>
    <recommendedName>
        <fullName>Asparagine synthetase [glutamine-hydrolyzing]</fullName>
        <ecNumber>6.3.5.4</ecNumber>
    </recommendedName>
    <alternativeName>
        <fullName>Glutamine-dependent asparagine synthetase</fullName>
    </alternativeName>
</protein>
<reference key="1">
    <citation type="journal article" date="1990" name="Nucleic Acids Res.">
        <title>A mammalian temperature-sensitive mutation affecting G1 progression results from a single amino acid substitution in asparagine synthetase.</title>
        <authorList>
            <person name="Gong S.S."/>
            <person name="Basilico C."/>
        </authorList>
    </citation>
    <scope>NUCLEOTIDE SEQUENCE [MRNA]</scope>
    <scope>MUTANTS TS11</scope>
    <source>
        <strain>Syrian</strain>
    </source>
</reference>
<keyword id="KW-0007">Acetylation</keyword>
<keyword id="KW-0028">Amino-acid biosynthesis</keyword>
<keyword id="KW-0061">Asparagine biosynthesis</keyword>
<keyword id="KW-0067">ATP-binding</keyword>
<keyword id="KW-0315">Glutamine amidotransferase</keyword>
<keyword id="KW-0436">Ligase</keyword>
<keyword id="KW-0547">Nucleotide-binding</keyword>
<keyword id="KW-0597">Phosphoprotein</keyword>
<keyword id="KW-1185">Reference proteome</keyword>
<proteinExistence type="evidence at protein level"/>